<comment type="function">
    <text evidence="1">Cleaves the N-terminal amino acid of tripeptides.</text>
</comment>
<comment type="catalytic activity">
    <reaction evidence="1">
        <text>Release of the N-terminal residue from a tripeptide.</text>
        <dbReference type="EC" id="3.4.11.4"/>
    </reaction>
</comment>
<comment type="cofactor">
    <cofactor evidence="1">
        <name>Zn(2+)</name>
        <dbReference type="ChEBI" id="CHEBI:29105"/>
    </cofactor>
    <text evidence="1">Binds 2 Zn(2+) ions per subunit.</text>
</comment>
<comment type="subcellular location">
    <subcellularLocation>
        <location evidence="1">Cytoplasm</location>
    </subcellularLocation>
</comment>
<comment type="similarity">
    <text evidence="1">Belongs to the peptidase M20B family.</text>
</comment>
<name>PEPT_STRPG</name>
<feature type="chain" id="PRO_1000017854" description="Peptidase T">
    <location>
        <begin position="1"/>
        <end position="407"/>
    </location>
</feature>
<feature type="active site" evidence="1">
    <location>
        <position position="84"/>
    </location>
</feature>
<feature type="active site" description="Proton acceptor" evidence="1">
    <location>
        <position position="177"/>
    </location>
</feature>
<feature type="binding site" evidence="1">
    <location>
        <position position="82"/>
    </location>
    <ligand>
        <name>Zn(2+)</name>
        <dbReference type="ChEBI" id="CHEBI:29105"/>
        <label>1</label>
    </ligand>
</feature>
<feature type="binding site" evidence="1">
    <location>
        <position position="143"/>
    </location>
    <ligand>
        <name>Zn(2+)</name>
        <dbReference type="ChEBI" id="CHEBI:29105"/>
        <label>1</label>
    </ligand>
</feature>
<feature type="binding site" evidence="1">
    <location>
        <position position="143"/>
    </location>
    <ligand>
        <name>Zn(2+)</name>
        <dbReference type="ChEBI" id="CHEBI:29105"/>
        <label>2</label>
    </ligand>
</feature>
<feature type="binding site" evidence="1">
    <location>
        <position position="178"/>
    </location>
    <ligand>
        <name>Zn(2+)</name>
        <dbReference type="ChEBI" id="CHEBI:29105"/>
        <label>2</label>
    </ligand>
</feature>
<feature type="binding site" evidence="1">
    <location>
        <position position="200"/>
    </location>
    <ligand>
        <name>Zn(2+)</name>
        <dbReference type="ChEBI" id="CHEBI:29105"/>
        <label>1</label>
    </ligand>
</feature>
<feature type="binding site" evidence="1">
    <location>
        <position position="382"/>
    </location>
    <ligand>
        <name>Zn(2+)</name>
        <dbReference type="ChEBI" id="CHEBI:29105"/>
        <label>2</label>
    </ligand>
</feature>
<dbReference type="EC" id="3.4.11.4" evidence="1"/>
<dbReference type="EMBL" id="AM295007">
    <property type="protein sequence ID" value="CAM30518.1"/>
    <property type="molecule type" value="Genomic_DNA"/>
</dbReference>
<dbReference type="RefSeq" id="WP_011889009.1">
    <property type="nucleotide sequence ID" value="NC_009332.1"/>
</dbReference>
<dbReference type="SMR" id="A2RF89"/>
<dbReference type="MEROPS" id="M20.003"/>
<dbReference type="GeneID" id="69901082"/>
<dbReference type="KEGG" id="spf:SpyM51192"/>
<dbReference type="HOGENOM" id="CLU_053676_0_0_9"/>
<dbReference type="GO" id="GO:0005829">
    <property type="term" value="C:cytosol"/>
    <property type="evidence" value="ECO:0007669"/>
    <property type="project" value="TreeGrafter"/>
</dbReference>
<dbReference type="GO" id="GO:0008237">
    <property type="term" value="F:metallopeptidase activity"/>
    <property type="evidence" value="ECO:0007669"/>
    <property type="project" value="UniProtKB-KW"/>
</dbReference>
<dbReference type="GO" id="GO:0045148">
    <property type="term" value="F:tripeptide aminopeptidase activity"/>
    <property type="evidence" value="ECO:0007669"/>
    <property type="project" value="UniProtKB-UniRule"/>
</dbReference>
<dbReference type="GO" id="GO:0008270">
    <property type="term" value="F:zinc ion binding"/>
    <property type="evidence" value="ECO:0007669"/>
    <property type="project" value="UniProtKB-UniRule"/>
</dbReference>
<dbReference type="GO" id="GO:0043171">
    <property type="term" value="P:peptide catabolic process"/>
    <property type="evidence" value="ECO:0007669"/>
    <property type="project" value="UniProtKB-UniRule"/>
</dbReference>
<dbReference type="GO" id="GO:0006508">
    <property type="term" value="P:proteolysis"/>
    <property type="evidence" value="ECO:0007669"/>
    <property type="project" value="UniProtKB-UniRule"/>
</dbReference>
<dbReference type="CDD" id="cd03892">
    <property type="entry name" value="M20_peptT"/>
    <property type="match status" value="1"/>
</dbReference>
<dbReference type="FunFam" id="3.30.70.360:FF:000002">
    <property type="entry name" value="Peptidase T"/>
    <property type="match status" value="1"/>
</dbReference>
<dbReference type="Gene3D" id="3.30.70.360">
    <property type="match status" value="1"/>
</dbReference>
<dbReference type="Gene3D" id="3.40.630.10">
    <property type="entry name" value="Zn peptidases"/>
    <property type="match status" value="1"/>
</dbReference>
<dbReference type="HAMAP" id="MF_00550">
    <property type="entry name" value="Aminopeptidase_M20"/>
    <property type="match status" value="1"/>
</dbReference>
<dbReference type="InterPro" id="IPR001261">
    <property type="entry name" value="ArgE/DapE_CS"/>
</dbReference>
<dbReference type="InterPro" id="IPR036264">
    <property type="entry name" value="Bact_exopeptidase_dim_dom"/>
</dbReference>
<dbReference type="InterPro" id="IPR002933">
    <property type="entry name" value="Peptidase_M20"/>
</dbReference>
<dbReference type="InterPro" id="IPR011650">
    <property type="entry name" value="Peptidase_M20_dimer"/>
</dbReference>
<dbReference type="InterPro" id="IPR010161">
    <property type="entry name" value="Peptidase_M20B"/>
</dbReference>
<dbReference type="NCBIfam" id="TIGR01882">
    <property type="entry name" value="peptidase-T"/>
    <property type="match status" value="1"/>
</dbReference>
<dbReference type="NCBIfam" id="NF003976">
    <property type="entry name" value="PRK05469.1"/>
    <property type="match status" value="1"/>
</dbReference>
<dbReference type="NCBIfam" id="NF009920">
    <property type="entry name" value="PRK13381.1"/>
    <property type="match status" value="1"/>
</dbReference>
<dbReference type="PANTHER" id="PTHR42994">
    <property type="entry name" value="PEPTIDASE T"/>
    <property type="match status" value="1"/>
</dbReference>
<dbReference type="PANTHER" id="PTHR42994:SF1">
    <property type="entry name" value="PEPTIDASE T"/>
    <property type="match status" value="1"/>
</dbReference>
<dbReference type="Pfam" id="PF07687">
    <property type="entry name" value="M20_dimer"/>
    <property type="match status" value="1"/>
</dbReference>
<dbReference type="Pfam" id="PF01546">
    <property type="entry name" value="Peptidase_M20"/>
    <property type="match status" value="1"/>
</dbReference>
<dbReference type="PIRSF" id="PIRSF037215">
    <property type="entry name" value="Peptidase_M20B"/>
    <property type="match status" value="1"/>
</dbReference>
<dbReference type="SUPFAM" id="SSF55031">
    <property type="entry name" value="Bacterial exopeptidase dimerisation domain"/>
    <property type="match status" value="1"/>
</dbReference>
<dbReference type="SUPFAM" id="SSF53187">
    <property type="entry name" value="Zn-dependent exopeptidases"/>
    <property type="match status" value="1"/>
</dbReference>
<dbReference type="PROSITE" id="PS00758">
    <property type="entry name" value="ARGE_DAPE_CPG2_1"/>
    <property type="match status" value="1"/>
</dbReference>
<dbReference type="PROSITE" id="PS00759">
    <property type="entry name" value="ARGE_DAPE_CPG2_2"/>
    <property type="match status" value="1"/>
</dbReference>
<accession>A2RF89</accession>
<sequence length="407" mass="45028">MKYDNLLDRFIKYVKVNTRSDPDSETTPSTESQEAFALTILKPEMEAIGLQDVHYNPVNGYLIGTLPANNPTLTRKIGFIAHMDTADFNAENVNPQIIDNYQGGDITLGSSNYKLDPKAFPNLNNYIGQTLITTDGTTLLGADDKSGIAEIMTAIEFLTSQPQIEHCDIKVAFGPDEEIGVGADKFEVADFEVDFAYTMDGGPLGELQYETFSAAALEVTFLGRNVHPGTAKDQMINALQLAIDFHEKLPAKERPEYTDGYQGFYHLTGLTGTVEEARASYIIRDFEEASFEARKVKVENIAQSMNAQLGTKRVLVELNDQYYNMKKVIEKDMTAIELAKEVMEELTIKPVIEPIRGGTDGSKISFMGIPTPNIFAGGENMHGRFEFVSLQTMERAVDVIIGLVCKA</sequence>
<keyword id="KW-0031">Aminopeptidase</keyword>
<keyword id="KW-0963">Cytoplasm</keyword>
<keyword id="KW-0378">Hydrolase</keyword>
<keyword id="KW-0479">Metal-binding</keyword>
<keyword id="KW-0482">Metalloprotease</keyword>
<keyword id="KW-0645">Protease</keyword>
<keyword id="KW-0862">Zinc</keyword>
<proteinExistence type="inferred from homology"/>
<gene>
    <name evidence="1" type="primary">pepT</name>
    <name type="ordered locus">SpyM51192</name>
</gene>
<protein>
    <recommendedName>
        <fullName evidence="1">Peptidase T</fullName>
        <ecNumber evidence="1">3.4.11.4</ecNumber>
    </recommendedName>
    <alternativeName>
        <fullName evidence="1">Aminotripeptidase</fullName>
        <shortName evidence="1">Tripeptidase</shortName>
    </alternativeName>
    <alternativeName>
        <fullName evidence="1">Tripeptide aminopeptidase</fullName>
    </alternativeName>
</protein>
<reference key="1">
    <citation type="journal article" date="2007" name="J. Bacteriol.">
        <title>Complete genome of acute rheumatic fever-associated serotype M5 Streptococcus pyogenes strain Manfredo.</title>
        <authorList>
            <person name="Holden M.T.G."/>
            <person name="Scott A."/>
            <person name="Cherevach I."/>
            <person name="Chillingworth T."/>
            <person name="Churcher C."/>
            <person name="Cronin A."/>
            <person name="Dowd L."/>
            <person name="Feltwell T."/>
            <person name="Hamlin N."/>
            <person name="Holroyd S."/>
            <person name="Jagels K."/>
            <person name="Moule S."/>
            <person name="Mungall K."/>
            <person name="Quail M.A."/>
            <person name="Price C."/>
            <person name="Rabbinowitsch E."/>
            <person name="Sharp S."/>
            <person name="Skelton J."/>
            <person name="Whitehead S."/>
            <person name="Barrell B.G."/>
            <person name="Kehoe M."/>
            <person name="Parkhill J."/>
        </authorList>
    </citation>
    <scope>NUCLEOTIDE SEQUENCE [LARGE SCALE GENOMIC DNA]</scope>
    <source>
        <strain>Manfredo</strain>
    </source>
</reference>
<evidence type="ECO:0000255" key="1">
    <source>
        <dbReference type="HAMAP-Rule" id="MF_00550"/>
    </source>
</evidence>
<organism>
    <name type="scientific">Streptococcus pyogenes serotype M5 (strain Manfredo)</name>
    <dbReference type="NCBI Taxonomy" id="160491"/>
    <lineage>
        <taxon>Bacteria</taxon>
        <taxon>Bacillati</taxon>
        <taxon>Bacillota</taxon>
        <taxon>Bacilli</taxon>
        <taxon>Lactobacillales</taxon>
        <taxon>Streptococcaceae</taxon>
        <taxon>Streptococcus</taxon>
    </lineage>
</organism>